<reference key="1">
    <citation type="journal article" date="1997" name="Infect. Immun.">
        <title>Identification of the ADP-L-glycero-D-manno-heptose-6-epimerase (rfaD) and heptosyltransferase II (rfaF) biosynthesis genes from nontypeable Haemophilus influenzae 2019.</title>
        <authorList>
            <person name="Nichols W.A."/>
            <person name="Gibson B.W."/>
            <person name="Melaugh W."/>
            <person name="Lee N.-G."/>
            <person name="Sunshine M."/>
            <person name="Apicella M.A."/>
        </authorList>
    </citation>
    <scope>NUCLEOTIDE SEQUENCE [GENOMIC DNA]</scope>
    <scope>ROLE IN LOS BIOSYNTHESIS</scope>
    <source>
        <strain>NTHi 2019</strain>
    </source>
</reference>
<reference key="2">
    <citation type="journal article" date="1995" name="Science">
        <title>Whole-genome random sequencing and assembly of Haemophilus influenzae Rd.</title>
        <authorList>
            <person name="Fleischmann R.D."/>
            <person name="Adams M.D."/>
            <person name="White O."/>
            <person name="Clayton R.A."/>
            <person name="Kirkness E.F."/>
            <person name="Kerlavage A.R."/>
            <person name="Bult C.J."/>
            <person name="Tomb J.-F."/>
            <person name="Dougherty B.A."/>
            <person name="Merrick J.M."/>
            <person name="McKenney K."/>
            <person name="Sutton G.G."/>
            <person name="FitzHugh W."/>
            <person name="Fields C.A."/>
            <person name="Gocayne J.D."/>
            <person name="Scott J.D."/>
            <person name="Shirley R."/>
            <person name="Liu L.-I."/>
            <person name="Glodek A."/>
            <person name="Kelley J.M."/>
            <person name="Weidman J.F."/>
            <person name="Phillips C.A."/>
            <person name="Spriggs T."/>
            <person name="Hedblom E."/>
            <person name="Cotton M.D."/>
            <person name="Utterback T.R."/>
            <person name="Hanna M.C."/>
            <person name="Nguyen D.T."/>
            <person name="Saudek D.M."/>
            <person name="Brandon R.C."/>
            <person name="Fine L.D."/>
            <person name="Fritchman J.L."/>
            <person name="Fuhrmann J.L."/>
            <person name="Geoghagen N.S.M."/>
            <person name="Gnehm C.L."/>
            <person name="McDonald L.A."/>
            <person name="Small K.V."/>
            <person name="Fraser C.M."/>
            <person name="Smith H.O."/>
            <person name="Venter J.C."/>
        </authorList>
    </citation>
    <scope>NUCLEOTIDE SEQUENCE [LARGE SCALE GENOMIC DNA]</scope>
    <source>
        <strain>ATCC 51907 / DSM 11121 / KW20 / Rd</strain>
    </source>
</reference>
<organism>
    <name type="scientific">Haemophilus influenzae (strain ATCC 51907 / DSM 11121 / KW20 / Rd)</name>
    <dbReference type="NCBI Taxonomy" id="71421"/>
    <lineage>
        <taxon>Bacteria</taxon>
        <taxon>Pseudomonadati</taxon>
        <taxon>Pseudomonadota</taxon>
        <taxon>Gammaproteobacteria</taxon>
        <taxon>Pasteurellales</taxon>
        <taxon>Pasteurellaceae</taxon>
        <taxon>Haemophilus</taxon>
    </lineage>
</organism>
<accession>P45048</accession>
<accession>Q48228</accession>
<name>HLDD_HAEIN</name>
<comment type="function">
    <text evidence="3">Catalyzes the interconversion between ADP-D-glycero-beta-D-manno-heptose and ADP-L-glycero-beta-D-manno-heptose via an epimerization at carbon 6 of the heptose.</text>
</comment>
<comment type="catalytic activity">
    <reaction evidence="1">
        <text>ADP-D-glycero-beta-D-manno-heptose = ADP-L-glycero-beta-D-manno-heptose</text>
        <dbReference type="Rhea" id="RHEA:17577"/>
        <dbReference type="ChEBI" id="CHEBI:59967"/>
        <dbReference type="ChEBI" id="CHEBI:61506"/>
        <dbReference type="EC" id="5.1.3.20"/>
    </reaction>
</comment>
<comment type="cofactor">
    <cofactor evidence="1">
        <name>NADP(+)</name>
        <dbReference type="ChEBI" id="CHEBI:58349"/>
    </cofactor>
    <text evidence="1">Binds 1 NADP(+) per subunit.</text>
</comment>
<comment type="pathway">
    <text evidence="1">Nucleotide-sugar biosynthesis; ADP-L-glycero-beta-D-manno-heptose biosynthesis; ADP-L-glycero-beta-D-manno-heptose from D-glycero-beta-D-manno-heptose 7-phosphate: step 4/4.</text>
</comment>
<comment type="pathway">
    <text>Bacterial outer membrane biogenesis; LOS core biosynthesis.</text>
</comment>
<comment type="subunit">
    <text evidence="1">Homopentamer.</text>
</comment>
<comment type="domain">
    <text evidence="1">Contains a large N-terminal NADP-binding domain, and a smaller C-terminal substrate-binding domain.</text>
</comment>
<comment type="similarity">
    <text evidence="1">Belongs to the NAD(P)-dependent epimerase/dehydratase family. HldD subfamily.</text>
</comment>
<gene>
    <name evidence="1" type="primary">hldD</name>
    <name type="synonym">rfaD</name>
    <name type="ordered locus">HI_1114</name>
</gene>
<keyword id="KW-0119">Carbohydrate metabolism</keyword>
<keyword id="KW-0413">Isomerase</keyword>
<keyword id="KW-0521">NADP</keyword>
<keyword id="KW-1185">Reference proteome</keyword>
<evidence type="ECO:0000255" key="1">
    <source>
        <dbReference type="HAMAP-Rule" id="MF_01601"/>
    </source>
</evidence>
<evidence type="ECO:0000305" key="2"/>
<evidence type="ECO:0000305" key="3">
    <source>
    </source>
</evidence>
<feature type="chain" id="PRO_0000205798" description="ADP-L-glycero-D-manno-heptose-6-epimerase">
    <location>
        <begin position="1"/>
        <end position="308"/>
    </location>
</feature>
<feature type="active site" description="Proton acceptor" evidence="1">
    <location>
        <position position="139"/>
    </location>
</feature>
<feature type="active site" description="Proton acceptor" evidence="1">
    <location>
        <position position="177"/>
    </location>
</feature>
<feature type="binding site" evidence="1">
    <location>
        <begin position="10"/>
        <end position="11"/>
    </location>
    <ligand>
        <name>NADP(+)</name>
        <dbReference type="ChEBI" id="CHEBI:58349"/>
    </ligand>
</feature>
<feature type="binding site" evidence="1">
    <location>
        <begin position="31"/>
        <end position="32"/>
    </location>
    <ligand>
        <name>NADP(+)</name>
        <dbReference type="ChEBI" id="CHEBI:58349"/>
    </ligand>
</feature>
<feature type="binding site" evidence="1">
    <location>
        <position position="38"/>
    </location>
    <ligand>
        <name>NADP(+)</name>
        <dbReference type="ChEBI" id="CHEBI:58349"/>
    </ligand>
</feature>
<feature type="binding site" evidence="1">
    <location>
        <position position="53"/>
    </location>
    <ligand>
        <name>NADP(+)</name>
        <dbReference type="ChEBI" id="CHEBI:58349"/>
    </ligand>
</feature>
<feature type="binding site" evidence="1">
    <location>
        <begin position="75"/>
        <end position="79"/>
    </location>
    <ligand>
        <name>NADP(+)</name>
        <dbReference type="ChEBI" id="CHEBI:58349"/>
    </ligand>
</feature>
<feature type="binding site" evidence="1">
    <location>
        <position position="92"/>
    </location>
    <ligand>
        <name>NADP(+)</name>
        <dbReference type="ChEBI" id="CHEBI:58349"/>
    </ligand>
</feature>
<feature type="binding site" evidence="1">
    <location>
        <position position="143"/>
    </location>
    <ligand>
        <name>NADP(+)</name>
        <dbReference type="ChEBI" id="CHEBI:58349"/>
    </ligand>
</feature>
<feature type="binding site" evidence="1">
    <location>
        <position position="168"/>
    </location>
    <ligand>
        <name>substrate</name>
    </ligand>
</feature>
<feature type="binding site" evidence="1">
    <location>
        <position position="169"/>
    </location>
    <ligand>
        <name>NADP(+)</name>
        <dbReference type="ChEBI" id="CHEBI:58349"/>
    </ligand>
</feature>
<feature type="binding site" evidence="1">
    <location>
        <position position="177"/>
    </location>
    <ligand>
        <name>NADP(+)</name>
        <dbReference type="ChEBI" id="CHEBI:58349"/>
    </ligand>
</feature>
<feature type="binding site" evidence="1">
    <location>
        <position position="179"/>
    </location>
    <ligand>
        <name>substrate</name>
    </ligand>
</feature>
<feature type="binding site" evidence="1">
    <location>
        <position position="186"/>
    </location>
    <ligand>
        <name>substrate</name>
    </ligand>
</feature>
<feature type="binding site" evidence="1">
    <location>
        <begin position="200"/>
        <end position="203"/>
    </location>
    <ligand>
        <name>substrate</name>
    </ligand>
</feature>
<feature type="binding site" evidence="1">
    <location>
        <position position="208"/>
    </location>
    <ligand>
        <name>substrate</name>
    </ligand>
</feature>
<feature type="binding site" evidence="1">
    <location>
        <position position="271"/>
    </location>
    <ligand>
        <name>substrate</name>
    </ligand>
</feature>
<feature type="sequence conflict" description="In Ref. 1; AAA98766." evidence="2" ref="1">
    <original>G</original>
    <variation>D</variation>
    <location>
        <position position="67"/>
    </location>
</feature>
<feature type="sequence conflict" description="In Ref. 1; AAA98766." evidence="2" ref="1">
    <original>T</original>
    <variation>A</variation>
    <location>
        <position position="299"/>
    </location>
</feature>
<dbReference type="EC" id="5.1.3.20" evidence="1"/>
<dbReference type="EMBL" id="L76100">
    <property type="protein sequence ID" value="AAA98766.1"/>
    <property type="molecule type" value="Genomic_DNA"/>
</dbReference>
<dbReference type="EMBL" id="L42023">
    <property type="protein sequence ID" value="AAC22768.1"/>
    <property type="molecule type" value="Genomic_DNA"/>
</dbReference>
<dbReference type="PIR" id="F64183">
    <property type="entry name" value="F64183"/>
</dbReference>
<dbReference type="RefSeq" id="NP_439271.1">
    <property type="nucleotide sequence ID" value="NC_000907.1"/>
</dbReference>
<dbReference type="SMR" id="P45048"/>
<dbReference type="STRING" id="71421.HI_1114"/>
<dbReference type="EnsemblBacteria" id="AAC22768">
    <property type="protein sequence ID" value="AAC22768"/>
    <property type="gene ID" value="HI_1114"/>
</dbReference>
<dbReference type="KEGG" id="hin:HI_1114"/>
<dbReference type="PATRIC" id="fig|71421.8.peg.1163"/>
<dbReference type="eggNOG" id="COG0451">
    <property type="taxonomic scope" value="Bacteria"/>
</dbReference>
<dbReference type="HOGENOM" id="CLU_007383_1_3_6"/>
<dbReference type="OrthoDB" id="9803010at2"/>
<dbReference type="PhylomeDB" id="P45048"/>
<dbReference type="BioCyc" id="HINF71421:G1GJ1-1149-MONOMER"/>
<dbReference type="UniPathway" id="UPA00356">
    <property type="reaction ID" value="UER00440"/>
</dbReference>
<dbReference type="UniPathway" id="UPA00976"/>
<dbReference type="Proteomes" id="UP000000579">
    <property type="component" value="Chromosome"/>
</dbReference>
<dbReference type="GO" id="GO:0008712">
    <property type="term" value="F:ADP-glyceromanno-heptose 6-epimerase activity"/>
    <property type="evidence" value="ECO:0007669"/>
    <property type="project" value="UniProtKB-UniRule"/>
</dbReference>
<dbReference type="GO" id="GO:0050661">
    <property type="term" value="F:NADP binding"/>
    <property type="evidence" value="ECO:0007669"/>
    <property type="project" value="InterPro"/>
</dbReference>
<dbReference type="GO" id="GO:0097171">
    <property type="term" value="P:ADP-L-glycero-beta-D-manno-heptose biosynthetic process"/>
    <property type="evidence" value="ECO:0007669"/>
    <property type="project" value="UniProtKB-UniPathway"/>
</dbReference>
<dbReference type="GO" id="GO:0005975">
    <property type="term" value="P:carbohydrate metabolic process"/>
    <property type="evidence" value="ECO:0007669"/>
    <property type="project" value="UniProtKB-UniRule"/>
</dbReference>
<dbReference type="CDD" id="cd05248">
    <property type="entry name" value="ADP_GME_SDR_e"/>
    <property type="match status" value="1"/>
</dbReference>
<dbReference type="Gene3D" id="3.40.50.720">
    <property type="entry name" value="NAD(P)-binding Rossmann-like Domain"/>
    <property type="match status" value="1"/>
</dbReference>
<dbReference type="Gene3D" id="3.90.25.10">
    <property type="entry name" value="UDP-galactose 4-epimerase, domain 1"/>
    <property type="match status" value="1"/>
</dbReference>
<dbReference type="HAMAP" id="MF_01601">
    <property type="entry name" value="Heptose_epimerase"/>
    <property type="match status" value="1"/>
</dbReference>
<dbReference type="InterPro" id="IPR001509">
    <property type="entry name" value="Epimerase_deHydtase"/>
</dbReference>
<dbReference type="InterPro" id="IPR011912">
    <property type="entry name" value="Heptose_epim"/>
</dbReference>
<dbReference type="InterPro" id="IPR036291">
    <property type="entry name" value="NAD(P)-bd_dom_sf"/>
</dbReference>
<dbReference type="NCBIfam" id="TIGR02197">
    <property type="entry name" value="heptose_epim"/>
    <property type="match status" value="1"/>
</dbReference>
<dbReference type="NCBIfam" id="NF008360">
    <property type="entry name" value="PRK11150.1"/>
    <property type="match status" value="1"/>
</dbReference>
<dbReference type="PANTHER" id="PTHR43103:SF3">
    <property type="entry name" value="ADP-L-GLYCERO-D-MANNO-HEPTOSE-6-EPIMERASE"/>
    <property type="match status" value="1"/>
</dbReference>
<dbReference type="PANTHER" id="PTHR43103">
    <property type="entry name" value="NUCLEOSIDE-DIPHOSPHATE-SUGAR EPIMERASE"/>
    <property type="match status" value="1"/>
</dbReference>
<dbReference type="Pfam" id="PF01370">
    <property type="entry name" value="Epimerase"/>
    <property type="match status" value="1"/>
</dbReference>
<dbReference type="SUPFAM" id="SSF51735">
    <property type="entry name" value="NAD(P)-binding Rossmann-fold domains"/>
    <property type="match status" value="1"/>
</dbReference>
<proteinExistence type="inferred from homology"/>
<sequence>MIIVTGGAGFIGSNIVKALNDLGRKDILVVDNLKDGTKFANLVDLDIADYCDKEDFIASIIAGDEFGDIDAVFHEGACSATTEWDGKYIMHNNYEYSKELLHYCLDREIPFFYASSAATYGDTKVFREEREFEGPLNVYGYSKFLFDQYVRNILPEAKSPVCGFRYFNVYGPRENHKGSMASVAFHLNNQILKGENPKLFAGSEHFRRDFVYVGDVAAVNIWCWQNGISGIYNLGTGNAESFRAVADAVVKFHGKGEIETIPFPEHLKSRYQEYTQADLTKLRSTGYDKPFKTVAEGVTEYMAWLNRK</sequence>
<protein>
    <recommendedName>
        <fullName evidence="1">ADP-L-glycero-D-manno-heptose-6-epimerase</fullName>
        <ecNumber evidence="1">5.1.3.20</ecNumber>
    </recommendedName>
    <alternativeName>
        <fullName evidence="1">ADP-L-glycero-beta-D-manno-heptose-6-epimerase</fullName>
        <shortName evidence="1">ADP-glyceromanno-heptose 6-epimerase</shortName>
        <shortName evidence="1">ADP-hep 6-epimerase</shortName>
        <shortName evidence="1">AGME</shortName>
    </alternativeName>
</protein>